<keyword id="KW-0315">Glutamine amidotransferase</keyword>
<keyword id="KW-0378">Hydrolase</keyword>
<keyword id="KW-0456">Lyase</keyword>
<keyword id="KW-0663">Pyridoxal phosphate</keyword>
<keyword id="KW-1185">Reference proteome</keyword>
<proteinExistence type="inferred from homology"/>
<dbReference type="EC" id="4.3.3.6" evidence="1"/>
<dbReference type="EC" id="3.5.1.2" evidence="1"/>
<dbReference type="EMBL" id="CP000673">
    <property type="protein sequence ID" value="EDK34426.1"/>
    <property type="molecule type" value="Genomic_DNA"/>
</dbReference>
<dbReference type="RefSeq" id="WP_012102759.1">
    <property type="nucleotide sequence ID" value="NC_009706.1"/>
</dbReference>
<dbReference type="SMR" id="A5MZY0"/>
<dbReference type="STRING" id="431943.CKL_2414"/>
<dbReference type="MEROPS" id="C26.A32"/>
<dbReference type="KEGG" id="ckl:CKL_2414"/>
<dbReference type="eggNOG" id="COG0311">
    <property type="taxonomic scope" value="Bacteria"/>
</dbReference>
<dbReference type="HOGENOM" id="CLU_069674_2_0_9"/>
<dbReference type="UniPathway" id="UPA00245"/>
<dbReference type="Proteomes" id="UP000002411">
    <property type="component" value="Chromosome"/>
</dbReference>
<dbReference type="GO" id="GO:0005829">
    <property type="term" value="C:cytosol"/>
    <property type="evidence" value="ECO:0007669"/>
    <property type="project" value="TreeGrafter"/>
</dbReference>
<dbReference type="GO" id="GO:1903600">
    <property type="term" value="C:glutaminase complex"/>
    <property type="evidence" value="ECO:0007669"/>
    <property type="project" value="TreeGrafter"/>
</dbReference>
<dbReference type="GO" id="GO:0004359">
    <property type="term" value="F:glutaminase activity"/>
    <property type="evidence" value="ECO:0007669"/>
    <property type="project" value="UniProtKB-UniRule"/>
</dbReference>
<dbReference type="GO" id="GO:0036381">
    <property type="term" value="F:pyridoxal 5'-phosphate synthase (glutamine hydrolysing) activity"/>
    <property type="evidence" value="ECO:0007669"/>
    <property type="project" value="UniProtKB-UniRule"/>
</dbReference>
<dbReference type="GO" id="GO:0006543">
    <property type="term" value="P:glutamine catabolic process"/>
    <property type="evidence" value="ECO:0007669"/>
    <property type="project" value="UniProtKB-UniRule"/>
</dbReference>
<dbReference type="GO" id="GO:0042823">
    <property type="term" value="P:pyridoxal phosphate biosynthetic process"/>
    <property type="evidence" value="ECO:0007669"/>
    <property type="project" value="UniProtKB-UniRule"/>
</dbReference>
<dbReference type="GO" id="GO:0008614">
    <property type="term" value="P:pyridoxine metabolic process"/>
    <property type="evidence" value="ECO:0007669"/>
    <property type="project" value="TreeGrafter"/>
</dbReference>
<dbReference type="CDD" id="cd01749">
    <property type="entry name" value="GATase1_PB"/>
    <property type="match status" value="1"/>
</dbReference>
<dbReference type="FunFam" id="3.40.50.880:FF:000010">
    <property type="entry name" value="uncharacterized protein LOC100176842 isoform X2"/>
    <property type="match status" value="1"/>
</dbReference>
<dbReference type="Gene3D" id="3.40.50.880">
    <property type="match status" value="1"/>
</dbReference>
<dbReference type="HAMAP" id="MF_01615">
    <property type="entry name" value="PdxT"/>
    <property type="match status" value="1"/>
</dbReference>
<dbReference type="InterPro" id="IPR029062">
    <property type="entry name" value="Class_I_gatase-like"/>
</dbReference>
<dbReference type="InterPro" id="IPR002161">
    <property type="entry name" value="PdxT/SNO"/>
</dbReference>
<dbReference type="InterPro" id="IPR021196">
    <property type="entry name" value="PdxT/SNO_CS"/>
</dbReference>
<dbReference type="NCBIfam" id="TIGR03800">
    <property type="entry name" value="PLP_synth_Pdx2"/>
    <property type="match status" value="1"/>
</dbReference>
<dbReference type="PANTHER" id="PTHR31559">
    <property type="entry name" value="PYRIDOXAL 5'-PHOSPHATE SYNTHASE SUBUNIT SNO"/>
    <property type="match status" value="1"/>
</dbReference>
<dbReference type="PANTHER" id="PTHR31559:SF0">
    <property type="entry name" value="PYRIDOXAL 5'-PHOSPHATE SYNTHASE SUBUNIT SNO1-RELATED"/>
    <property type="match status" value="1"/>
</dbReference>
<dbReference type="Pfam" id="PF01174">
    <property type="entry name" value="SNO"/>
    <property type="match status" value="1"/>
</dbReference>
<dbReference type="PIRSF" id="PIRSF005639">
    <property type="entry name" value="Glut_amidoT_SNO"/>
    <property type="match status" value="1"/>
</dbReference>
<dbReference type="SUPFAM" id="SSF52317">
    <property type="entry name" value="Class I glutamine amidotransferase-like"/>
    <property type="match status" value="1"/>
</dbReference>
<dbReference type="PROSITE" id="PS01236">
    <property type="entry name" value="PDXT_SNO_1"/>
    <property type="match status" value="1"/>
</dbReference>
<dbReference type="PROSITE" id="PS51130">
    <property type="entry name" value="PDXT_SNO_2"/>
    <property type="match status" value="1"/>
</dbReference>
<organism>
    <name type="scientific">Clostridium kluyveri (strain ATCC 8527 / DSM 555 / NBRC 12016 / NCIMB 10680 / K1)</name>
    <dbReference type="NCBI Taxonomy" id="431943"/>
    <lineage>
        <taxon>Bacteria</taxon>
        <taxon>Bacillati</taxon>
        <taxon>Bacillota</taxon>
        <taxon>Clostridia</taxon>
        <taxon>Eubacteriales</taxon>
        <taxon>Clostridiaceae</taxon>
        <taxon>Clostridium</taxon>
    </lineage>
</organism>
<reference key="1">
    <citation type="journal article" date="2008" name="Proc. Natl. Acad. Sci. U.S.A.">
        <title>The genome of Clostridium kluyveri, a strict anaerobe with unique metabolic features.</title>
        <authorList>
            <person name="Seedorf H."/>
            <person name="Fricke W.F."/>
            <person name="Veith B."/>
            <person name="Brueggemann H."/>
            <person name="Liesegang H."/>
            <person name="Strittmatter A."/>
            <person name="Miethke M."/>
            <person name="Buckel W."/>
            <person name="Hinderberger J."/>
            <person name="Li F."/>
            <person name="Hagemeier C."/>
            <person name="Thauer R.K."/>
            <person name="Gottschalk G."/>
        </authorList>
    </citation>
    <scope>NUCLEOTIDE SEQUENCE [LARGE SCALE GENOMIC DNA]</scope>
    <source>
        <strain>ATCC 8527 / DSM 555 / NBRC 12016 / NCIMB 10680 / K1</strain>
    </source>
</reference>
<comment type="function">
    <text evidence="1">Catalyzes the hydrolysis of glutamine to glutamate and ammonia as part of the biosynthesis of pyridoxal 5'-phosphate. The resulting ammonia molecule is channeled to the active site of PdxS.</text>
</comment>
<comment type="catalytic activity">
    <reaction evidence="1">
        <text>aldehydo-D-ribose 5-phosphate + D-glyceraldehyde 3-phosphate + L-glutamine = pyridoxal 5'-phosphate + L-glutamate + phosphate + 3 H2O + H(+)</text>
        <dbReference type="Rhea" id="RHEA:31507"/>
        <dbReference type="ChEBI" id="CHEBI:15377"/>
        <dbReference type="ChEBI" id="CHEBI:15378"/>
        <dbReference type="ChEBI" id="CHEBI:29985"/>
        <dbReference type="ChEBI" id="CHEBI:43474"/>
        <dbReference type="ChEBI" id="CHEBI:58273"/>
        <dbReference type="ChEBI" id="CHEBI:58359"/>
        <dbReference type="ChEBI" id="CHEBI:59776"/>
        <dbReference type="ChEBI" id="CHEBI:597326"/>
        <dbReference type="EC" id="4.3.3.6"/>
    </reaction>
</comment>
<comment type="catalytic activity">
    <reaction evidence="1">
        <text>L-glutamine + H2O = L-glutamate + NH4(+)</text>
        <dbReference type="Rhea" id="RHEA:15889"/>
        <dbReference type="ChEBI" id="CHEBI:15377"/>
        <dbReference type="ChEBI" id="CHEBI:28938"/>
        <dbReference type="ChEBI" id="CHEBI:29985"/>
        <dbReference type="ChEBI" id="CHEBI:58359"/>
        <dbReference type="EC" id="3.5.1.2"/>
    </reaction>
</comment>
<comment type="pathway">
    <text evidence="1">Cofactor biosynthesis; pyridoxal 5'-phosphate biosynthesis.</text>
</comment>
<comment type="subunit">
    <text evidence="1">In the presence of PdxS, forms a dodecamer of heterodimers. Only shows activity in the heterodimer.</text>
</comment>
<comment type="similarity">
    <text evidence="1">Belongs to the glutaminase PdxT/SNO family.</text>
</comment>
<accession>A5MZY0</accession>
<sequence>MRIGVLSFQGGVIEHIHHIESLKAIPVEIKNKYELNNIDGIILPGGESTTMGKLLMDTDMLEPLREKILKGLPTWGTCAGMILLANSIENSNKSYLKVIDIKVRRNAYGSQIDSFYYETLIPDISSSKIPLVFIRAPFITYLGSNVKSLCSIKGNVVAARYKNILVTSFHPELTDDLSFHKYFLSTCR</sequence>
<feature type="chain" id="PRO_1000088048" description="Pyridoxal 5'-phosphate synthase subunit PdxT">
    <location>
        <begin position="1"/>
        <end position="188"/>
    </location>
</feature>
<feature type="active site" description="Nucleophile" evidence="1">
    <location>
        <position position="78"/>
    </location>
</feature>
<feature type="active site" description="Charge relay system" evidence="1">
    <location>
        <position position="170"/>
    </location>
</feature>
<feature type="active site" description="Charge relay system" evidence="1">
    <location>
        <position position="172"/>
    </location>
</feature>
<feature type="binding site" evidence="1">
    <location>
        <begin position="46"/>
        <end position="48"/>
    </location>
    <ligand>
        <name>L-glutamine</name>
        <dbReference type="ChEBI" id="CHEBI:58359"/>
    </ligand>
</feature>
<feature type="binding site" evidence="1">
    <location>
        <position position="105"/>
    </location>
    <ligand>
        <name>L-glutamine</name>
        <dbReference type="ChEBI" id="CHEBI:58359"/>
    </ligand>
</feature>
<feature type="binding site" evidence="1">
    <location>
        <begin position="134"/>
        <end position="135"/>
    </location>
    <ligand>
        <name>L-glutamine</name>
        <dbReference type="ChEBI" id="CHEBI:58359"/>
    </ligand>
</feature>
<protein>
    <recommendedName>
        <fullName evidence="1">Pyridoxal 5'-phosphate synthase subunit PdxT</fullName>
        <ecNumber evidence="1">4.3.3.6</ecNumber>
    </recommendedName>
    <alternativeName>
        <fullName evidence="1">Pdx2</fullName>
    </alternativeName>
    <alternativeName>
        <fullName evidence="1">Pyridoxal 5'-phosphate synthase glutaminase subunit</fullName>
        <ecNumber evidence="1">3.5.1.2</ecNumber>
    </alternativeName>
</protein>
<evidence type="ECO:0000255" key="1">
    <source>
        <dbReference type="HAMAP-Rule" id="MF_01615"/>
    </source>
</evidence>
<gene>
    <name evidence="1" type="primary">pdxT</name>
    <name type="ordered locus">CKL_2414</name>
</gene>
<name>PDXT_CLOK5</name>